<evidence type="ECO:0000250" key="1">
    <source>
        <dbReference type="UniProtKB" id="P16255"/>
    </source>
</evidence>
<evidence type="ECO:0000250" key="2">
    <source>
        <dbReference type="UniProtKB" id="P37108"/>
    </source>
</evidence>
<evidence type="ECO:0000305" key="3"/>
<accession>O18881</accession>
<feature type="chain" id="PRO_0000135190" description="Signal recognition particle 14 kDa protein">
    <location>
        <begin position="1" status="less than"/>
        <end position="74"/>
    </location>
</feature>
<feature type="non-terminal residue">
    <location>
        <position position="1"/>
    </location>
</feature>
<dbReference type="EMBL" id="AF027404">
    <property type="protein sequence ID" value="AAB86815.1"/>
    <property type="molecule type" value="Genomic_DNA"/>
</dbReference>
<dbReference type="SMR" id="O18881"/>
<dbReference type="GO" id="GO:0005786">
    <property type="term" value="C:signal recognition particle, endoplasmic reticulum targeting"/>
    <property type="evidence" value="ECO:0007669"/>
    <property type="project" value="UniProtKB-KW"/>
</dbReference>
<dbReference type="GO" id="GO:0008312">
    <property type="term" value="F:7S RNA binding"/>
    <property type="evidence" value="ECO:0007669"/>
    <property type="project" value="InterPro"/>
</dbReference>
<dbReference type="GO" id="GO:0030942">
    <property type="term" value="F:endoplasmic reticulum signal peptide binding"/>
    <property type="evidence" value="ECO:0007669"/>
    <property type="project" value="InterPro"/>
</dbReference>
<dbReference type="GO" id="GO:0006614">
    <property type="term" value="P:SRP-dependent cotranslational protein targeting to membrane"/>
    <property type="evidence" value="ECO:0007669"/>
    <property type="project" value="InterPro"/>
</dbReference>
<dbReference type="Gene3D" id="3.30.720.10">
    <property type="entry name" value="Signal recognition particle alu RNA binding heterodimer, srp9/1"/>
    <property type="match status" value="1"/>
</dbReference>
<dbReference type="InterPro" id="IPR003210">
    <property type="entry name" value="Signal_recog_particle_SRP14"/>
</dbReference>
<dbReference type="InterPro" id="IPR009018">
    <property type="entry name" value="Signal_recog_particle_SRP9/14"/>
</dbReference>
<dbReference type="PANTHER" id="PTHR12013">
    <property type="entry name" value="SIGNAL RECOGNITION PARTICLE 14 KD PROTEIN"/>
    <property type="match status" value="1"/>
</dbReference>
<dbReference type="Pfam" id="PF02290">
    <property type="entry name" value="SRP14"/>
    <property type="match status" value="1"/>
</dbReference>
<dbReference type="SUPFAM" id="SSF54762">
    <property type="entry name" value="Signal recognition particle alu RNA binding heterodimer, SRP9/14"/>
    <property type="match status" value="1"/>
</dbReference>
<proteinExistence type="inferred from homology"/>
<protein>
    <recommendedName>
        <fullName>Signal recognition particle 14 kDa protein</fullName>
        <shortName>SRP14</shortName>
    </recommendedName>
</protein>
<name>SRP14_MACRA</name>
<comment type="function">
    <text evidence="2">Component of the signal recognition particle (SRP) complex, a ribonucleoprotein complex that mediates the cotranslational targeting of secretory and membrane proteins to the endoplasmic reticulum (ER) (By similarity). SRP9 together with SRP14 and the Alu portion of the SRP RNA, constitutes the elongation arrest domain of SRP (By similarity). The complex of SRP9 and SRP14 is required for SRP RNA binding (By similarity).</text>
</comment>
<comment type="subunit">
    <text evidence="1 2">Heterodimer with SRP9; binds RNA as heterodimer (By similarity). Component of a signal recognition particle (SRP) complex that consists of a 7SL RNA molecule of 300 nucleotides and six protein subunits: SRP72, SRP68, SRP54, SRP19, SRP14 and SRP9 (By similarity).</text>
</comment>
<comment type="subcellular location">
    <subcellularLocation>
        <location>Cytoplasm</location>
    </subcellularLocation>
</comment>
<comment type="similarity">
    <text evidence="3">Belongs to the SRP14 family.</text>
</comment>
<gene>
    <name type="primary">SRP14</name>
    <name type="synonym">SRP14A</name>
</gene>
<reference key="1">
    <citation type="submission" date="1997-09" db="EMBL/GenBank/DDBJ databases">
        <title>Partial sequence of the signal recognition particle gene (SRP) from the bonnet monkey, Macaca radiata.</title>
        <authorList>
            <person name="Ganesh S."/>
            <person name="Saleem Q."/>
            <person name="Brahmachari S.K."/>
        </authorList>
    </citation>
    <scope>NUCLEOTIDE SEQUENCE [GENOMIC DNA]</scope>
</reference>
<organism>
    <name type="scientific">Macaca radiata</name>
    <name type="common">Bonnet macaque</name>
    <dbReference type="NCBI Taxonomy" id="9548"/>
    <lineage>
        <taxon>Eukaryota</taxon>
        <taxon>Metazoa</taxon>
        <taxon>Chordata</taxon>
        <taxon>Craniata</taxon>
        <taxon>Vertebrata</taxon>
        <taxon>Euteleostomi</taxon>
        <taxon>Mammalia</taxon>
        <taxon>Eutheria</taxon>
        <taxon>Euarchontoglires</taxon>
        <taxon>Primates</taxon>
        <taxon>Haplorrhini</taxon>
        <taxon>Catarrhini</taxon>
        <taxon>Cercopithecidae</taxon>
        <taxon>Cercopithecinae</taxon>
        <taxon>Macaca</taxon>
    </lineage>
</organism>
<keyword id="KW-0963">Cytoplasm</keyword>
<keyword id="KW-0687">Ribonucleoprotein</keyword>
<keyword id="KW-0694">RNA-binding</keyword>
<keyword id="KW-0733">Signal recognition particle</keyword>
<sequence length="74" mass="7376">STVVSSKEVNKFQMAYSNLLRANMDGLKKRDKKNKTKKTKAAAAAAAAAVAAAAAPTAAATTATPATPAATAAQ</sequence>